<comment type="function">
    <text evidence="1">Catalyzes the hydrolysis of UDP-3-O-myristoyl-N-acetylglucosamine to form UDP-3-O-myristoylglucosamine and acetate, the committed step in lipid A biosynthesis.</text>
</comment>
<comment type="catalytic activity">
    <reaction evidence="1">
        <text>a UDP-3-O-[(3R)-3-hydroxyacyl]-N-acetyl-alpha-D-glucosamine + H2O = a UDP-3-O-[(3R)-3-hydroxyacyl]-alpha-D-glucosamine + acetate</text>
        <dbReference type="Rhea" id="RHEA:67816"/>
        <dbReference type="ChEBI" id="CHEBI:15377"/>
        <dbReference type="ChEBI" id="CHEBI:30089"/>
        <dbReference type="ChEBI" id="CHEBI:137740"/>
        <dbReference type="ChEBI" id="CHEBI:173225"/>
        <dbReference type="EC" id="3.5.1.108"/>
    </reaction>
</comment>
<comment type="cofactor">
    <cofactor evidence="1">
        <name>Zn(2+)</name>
        <dbReference type="ChEBI" id="CHEBI:29105"/>
    </cofactor>
</comment>
<comment type="pathway">
    <text evidence="1">Glycolipid biosynthesis; lipid IV(A) biosynthesis; lipid IV(A) from (3R)-3-hydroxytetradecanoyl-[acyl-carrier-protein] and UDP-N-acetyl-alpha-D-glucosamine: step 2/6.</text>
</comment>
<comment type="similarity">
    <text evidence="1">Belongs to the LpxC family.</text>
</comment>
<keyword id="KW-0378">Hydrolase</keyword>
<keyword id="KW-0441">Lipid A biosynthesis</keyword>
<keyword id="KW-0444">Lipid biosynthesis</keyword>
<keyword id="KW-0443">Lipid metabolism</keyword>
<keyword id="KW-0479">Metal-binding</keyword>
<keyword id="KW-1185">Reference proteome</keyword>
<keyword id="KW-0862">Zinc</keyword>
<sequence length="306" mass="33803">MIFQRTVKEMVKTTGVGLHSGNKVTLTIKPAPVNTGIVLVRTDLTPSVAIAAKADQVRETTMCTALVNDEGVRISTIEHLFAALAGLGIDNATIEVDAPEIPIMDGSASPWVFLLQSVGIQEQSAAKKYLRIKRPVRVEDGDKWAELRPFKGFRVDFAIDFNHPEIARSQQHMVMDFSSSAFVRDISRARTFGFMRDIEYLRANNLALGGSMENAVVLDEYRVLNPDGLRYEDEFVKHKILDAFGDLYVAGHAIVGEFRAFKTGHALNNQLVRALLAEQDAWELVSFEKEEEVPVSFAVPAGAVLA</sequence>
<gene>
    <name evidence="1" type="primary">lpxC</name>
    <name type="ordered locus">Shew_3448</name>
</gene>
<evidence type="ECO:0000255" key="1">
    <source>
        <dbReference type="HAMAP-Rule" id="MF_00388"/>
    </source>
</evidence>
<proteinExistence type="inferred from homology"/>
<organism>
    <name type="scientific">Shewanella loihica (strain ATCC BAA-1088 / PV-4)</name>
    <dbReference type="NCBI Taxonomy" id="323850"/>
    <lineage>
        <taxon>Bacteria</taxon>
        <taxon>Pseudomonadati</taxon>
        <taxon>Pseudomonadota</taxon>
        <taxon>Gammaproteobacteria</taxon>
        <taxon>Alteromonadales</taxon>
        <taxon>Shewanellaceae</taxon>
        <taxon>Shewanella</taxon>
    </lineage>
</organism>
<reference key="1">
    <citation type="submission" date="2007-03" db="EMBL/GenBank/DDBJ databases">
        <title>Complete sequence of Shewanella loihica PV-4.</title>
        <authorList>
            <consortium name="US DOE Joint Genome Institute"/>
            <person name="Copeland A."/>
            <person name="Lucas S."/>
            <person name="Lapidus A."/>
            <person name="Barry K."/>
            <person name="Detter J.C."/>
            <person name="Glavina del Rio T."/>
            <person name="Hammon N."/>
            <person name="Israni S."/>
            <person name="Dalin E."/>
            <person name="Tice H."/>
            <person name="Pitluck S."/>
            <person name="Chain P."/>
            <person name="Malfatti S."/>
            <person name="Shin M."/>
            <person name="Vergez L."/>
            <person name="Schmutz J."/>
            <person name="Larimer F."/>
            <person name="Land M."/>
            <person name="Hauser L."/>
            <person name="Kyrpides N."/>
            <person name="Mikhailova N."/>
            <person name="Romine M.F."/>
            <person name="Serres G."/>
            <person name="Fredrickson J."/>
            <person name="Tiedje J."/>
            <person name="Richardson P."/>
        </authorList>
    </citation>
    <scope>NUCLEOTIDE SEQUENCE [LARGE SCALE GENOMIC DNA]</scope>
    <source>
        <strain>ATCC BAA-1088 / PV-4</strain>
    </source>
</reference>
<name>LPXC_SHELP</name>
<dbReference type="EC" id="3.5.1.108" evidence="1"/>
<dbReference type="EMBL" id="CP000606">
    <property type="protein sequence ID" value="ABO25314.1"/>
    <property type="molecule type" value="Genomic_DNA"/>
</dbReference>
<dbReference type="RefSeq" id="WP_011867244.1">
    <property type="nucleotide sequence ID" value="NC_009092.1"/>
</dbReference>
<dbReference type="SMR" id="A3QIL6"/>
<dbReference type="STRING" id="323850.Shew_3448"/>
<dbReference type="KEGG" id="slo:Shew_3448"/>
<dbReference type="eggNOG" id="COG0774">
    <property type="taxonomic scope" value="Bacteria"/>
</dbReference>
<dbReference type="HOGENOM" id="CLU_046528_1_0_6"/>
<dbReference type="OrthoDB" id="9802746at2"/>
<dbReference type="UniPathway" id="UPA00359">
    <property type="reaction ID" value="UER00478"/>
</dbReference>
<dbReference type="Proteomes" id="UP000001558">
    <property type="component" value="Chromosome"/>
</dbReference>
<dbReference type="GO" id="GO:0016020">
    <property type="term" value="C:membrane"/>
    <property type="evidence" value="ECO:0007669"/>
    <property type="project" value="GOC"/>
</dbReference>
<dbReference type="GO" id="GO:0046872">
    <property type="term" value="F:metal ion binding"/>
    <property type="evidence" value="ECO:0007669"/>
    <property type="project" value="UniProtKB-KW"/>
</dbReference>
<dbReference type="GO" id="GO:0103117">
    <property type="term" value="F:UDP-3-O-acyl-N-acetylglucosamine deacetylase activity"/>
    <property type="evidence" value="ECO:0007669"/>
    <property type="project" value="UniProtKB-UniRule"/>
</dbReference>
<dbReference type="GO" id="GO:0009245">
    <property type="term" value="P:lipid A biosynthetic process"/>
    <property type="evidence" value="ECO:0007669"/>
    <property type="project" value="UniProtKB-UniRule"/>
</dbReference>
<dbReference type="Gene3D" id="3.30.230.20">
    <property type="entry name" value="lpxc deacetylase, domain 1"/>
    <property type="match status" value="1"/>
</dbReference>
<dbReference type="Gene3D" id="3.30.1700.10">
    <property type="entry name" value="lpxc deacetylase, domain 2"/>
    <property type="match status" value="1"/>
</dbReference>
<dbReference type="HAMAP" id="MF_00388">
    <property type="entry name" value="LpxC"/>
    <property type="match status" value="1"/>
</dbReference>
<dbReference type="InterPro" id="IPR020568">
    <property type="entry name" value="Ribosomal_Su5_D2-typ_SF"/>
</dbReference>
<dbReference type="InterPro" id="IPR004463">
    <property type="entry name" value="UDP-acyl_GlcNac_deAcase"/>
</dbReference>
<dbReference type="InterPro" id="IPR011334">
    <property type="entry name" value="UDP-acyl_GlcNac_deAcase_C"/>
</dbReference>
<dbReference type="InterPro" id="IPR015870">
    <property type="entry name" value="UDP-acyl_N-AcGlcN_deAcase_N"/>
</dbReference>
<dbReference type="NCBIfam" id="TIGR00325">
    <property type="entry name" value="lpxC"/>
    <property type="match status" value="1"/>
</dbReference>
<dbReference type="PANTHER" id="PTHR33694">
    <property type="entry name" value="UDP-3-O-ACYL-N-ACETYLGLUCOSAMINE DEACETYLASE 1, MITOCHONDRIAL-RELATED"/>
    <property type="match status" value="1"/>
</dbReference>
<dbReference type="PANTHER" id="PTHR33694:SF1">
    <property type="entry name" value="UDP-3-O-ACYL-N-ACETYLGLUCOSAMINE DEACETYLASE 1, MITOCHONDRIAL-RELATED"/>
    <property type="match status" value="1"/>
</dbReference>
<dbReference type="Pfam" id="PF03331">
    <property type="entry name" value="LpxC"/>
    <property type="match status" value="1"/>
</dbReference>
<dbReference type="SUPFAM" id="SSF54211">
    <property type="entry name" value="Ribosomal protein S5 domain 2-like"/>
    <property type="match status" value="2"/>
</dbReference>
<feature type="chain" id="PRO_1000013230" description="UDP-3-O-acyl-N-acetylglucosamine deacetylase">
    <location>
        <begin position="1"/>
        <end position="306"/>
    </location>
</feature>
<feature type="active site" description="Proton donor" evidence="1">
    <location>
        <position position="265"/>
    </location>
</feature>
<feature type="binding site" evidence="1">
    <location>
        <position position="79"/>
    </location>
    <ligand>
        <name>Zn(2+)</name>
        <dbReference type="ChEBI" id="CHEBI:29105"/>
    </ligand>
</feature>
<feature type="binding site" evidence="1">
    <location>
        <position position="238"/>
    </location>
    <ligand>
        <name>Zn(2+)</name>
        <dbReference type="ChEBI" id="CHEBI:29105"/>
    </ligand>
</feature>
<feature type="binding site" evidence="1">
    <location>
        <position position="242"/>
    </location>
    <ligand>
        <name>Zn(2+)</name>
        <dbReference type="ChEBI" id="CHEBI:29105"/>
    </ligand>
</feature>
<protein>
    <recommendedName>
        <fullName evidence="1">UDP-3-O-acyl-N-acetylglucosamine deacetylase</fullName>
        <shortName evidence="1">UDP-3-O-acyl-GlcNAc deacetylase</shortName>
        <ecNumber evidence="1">3.5.1.108</ecNumber>
    </recommendedName>
    <alternativeName>
        <fullName evidence="1">UDP-3-O-[R-3-hydroxymyristoyl]-N-acetylglucosamine deacetylase</fullName>
    </alternativeName>
</protein>
<accession>A3QIL6</accession>